<feature type="chain" id="PRO_1000135735" description="3-isopropylmalate dehydratase large subunit">
    <location>
        <begin position="1"/>
        <end position="424"/>
    </location>
</feature>
<feature type="binding site" evidence="1">
    <location>
        <position position="299"/>
    </location>
    <ligand>
        <name>[4Fe-4S] cluster</name>
        <dbReference type="ChEBI" id="CHEBI:49883"/>
    </ligand>
</feature>
<feature type="binding site" evidence="1">
    <location>
        <position position="359"/>
    </location>
    <ligand>
        <name>[4Fe-4S] cluster</name>
        <dbReference type="ChEBI" id="CHEBI:49883"/>
    </ligand>
</feature>
<feature type="binding site" evidence="1">
    <location>
        <position position="362"/>
    </location>
    <ligand>
        <name>[4Fe-4S] cluster</name>
        <dbReference type="ChEBI" id="CHEBI:49883"/>
    </ligand>
</feature>
<protein>
    <recommendedName>
        <fullName evidence="1">3-isopropylmalate dehydratase large subunit</fullName>
        <ecNumber evidence="1">4.2.1.33</ecNumber>
    </recommendedName>
    <alternativeName>
        <fullName evidence="1">Alpha-IPM isomerase</fullName>
        <shortName evidence="1">IPMI</shortName>
    </alternativeName>
    <alternativeName>
        <fullName evidence="1">Isopropylmalate isomerase</fullName>
    </alternativeName>
</protein>
<comment type="function">
    <text evidence="1">Catalyzes the isomerization between 2-isopropylmalate and 3-isopropylmalate, via the formation of 2-isopropylmaleate.</text>
</comment>
<comment type="catalytic activity">
    <reaction evidence="1">
        <text>(2R,3S)-3-isopropylmalate = (2S)-2-isopropylmalate</text>
        <dbReference type="Rhea" id="RHEA:32287"/>
        <dbReference type="ChEBI" id="CHEBI:1178"/>
        <dbReference type="ChEBI" id="CHEBI:35121"/>
        <dbReference type="EC" id="4.2.1.33"/>
    </reaction>
</comment>
<comment type="cofactor">
    <cofactor evidence="1">
        <name>[4Fe-4S] cluster</name>
        <dbReference type="ChEBI" id="CHEBI:49883"/>
    </cofactor>
    <text evidence="1">Binds 1 [4Fe-4S] cluster per subunit.</text>
</comment>
<comment type="pathway">
    <text evidence="1">Amino-acid biosynthesis; L-leucine biosynthesis; L-leucine from 3-methyl-2-oxobutanoate: step 2/4.</text>
</comment>
<comment type="subunit">
    <text evidence="1">Heterodimer of LeuC and LeuD.</text>
</comment>
<comment type="similarity">
    <text evidence="1">Belongs to the aconitase/IPM isomerase family. LeuC type 2 subfamily.</text>
</comment>
<proteinExistence type="inferred from homology"/>
<dbReference type="EC" id="4.2.1.33" evidence="1"/>
<dbReference type="EMBL" id="CP001130">
    <property type="protein sequence ID" value="ACG57206.1"/>
    <property type="molecule type" value="Genomic_DNA"/>
</dbReference>
<dbReference type="RefSeq" id="WP_012513562.1">
    <property type="nucleotide sequence ID" value="NC_011126.1"/>
</dbReference>
<dbReference type="SMR" id="B4U7U5"/>
<dbReference type="STRING" id="380749.HY04AAS1_0519"/>
<dbReference type="KEGG" id="hya:HY04AAS1_0519"/>
<dbReference type="eggNOG" id="COG0065">
    <property type="taxonomic scope" value="Bacteria"/>
</dbReference>
<dbReference type="HOGENOM" id="CLU_006714_3_4_0"/>
<dbReference type="OrthoDB" id="9764318at2"/>
<dbReference type="UniPathway" id="UPA00048">
    <property type="reaction ID" value="UER00071"/>
</dbReference>
<dbReference type="GO" id="GO:0003861">
    <property type="term" value="F:3-isopropylmalate dehydratase activity"/>
    <property type="evidence" value="ECO:0007669"/>
    <property type="project" value="UniProtKB-UniRule"/>
</dbReference>
<dbReference type="GO" id="GO:0051539">
    <property type="term" value="F:4 iron, 4 sulfur cluster binding"/>
    <property type="evidence" value="ECO:0007669"/>
    <property type="project" value="UniProtKB-KW"/>
</dbReference>
<dbReference type="GO" id="GO:0046872">
    <property type="term" value="F:metal ion binding"/>
    <property type="evidence" value="ECO:0007669"/>
    <property type="project" value="UniProtKB-KW"/>
</dbReference>
<dbReference type="GO" id="GO:0009098">
    <property type="term" value="P:L-leucine biosynthetic process"/>
    <property type="evidence" value="ECO:0007669"/>
    <property type="project" value="UniProtKB-UniRule"/>
</dbReference>
<dbReference type="CDD" id="cd01583">
    <property type="entry name" value="IPMI"/>
    <property type="match status" value="1"/>
</dbReference>
<dbReference type="Gene3D" id="3.30.499.10">
    <property type="entry name" value="Aconitase, domain 3"/>
    <property type="match status" value="2"/>
</dbReference>
<dbReference type="HAMAP" id="MF_01027">
    <property type="entry name" value="LeuC_type2"/>
    <property type="match status" value="1"/>
</dbReference>
<dbReference type="InterPro" id="IPR015931">
    <property type="entry name" value="Acnase/IPM_dHydase_lsu_aba_1/3"/>
</dbReference>
<dbReference type="InterPro" id="IPR001030">
    <property type="entry name" value="Acoase/IPM_deHydtase_lsu_aba"/>
</dbReference>
<dbReference type="InterPro" id="IPR018136">
    <property type="entry name" value="Aconitase_4Fe-4S_BS"/>
</dbReference>
<dbReference type="InterPro" id="IPR036008">
    <property type="entry name" value="Aconitase_4Fe-4S_dom"/>
</dbReference>
<dbReference type="InterPro" id="IPR011826">
    <property type="entry name" value="HAcnase/IPMdehydase_lsu_prok"/>
</dbReference>
<dbReference type="InterPro" id="IPR006251">
    <property type="entry name" value="Homoacnase/IPMdehydase_lsu"/>
</dbReference>
<dbReference type="InterPro" id="IPR050067">
    <property type="entry name" value="IPM_dehydratase_rel_enz"/>
</dbReference>
<dbReference type="InterPro" id="IPR033941">
    <property type="entry name" value="IPMI_cat"/>
</dbReference>
<dbReference type="InterPro" id="IPR011823">
    <property type="entry name" value="IsopropMal_deHydtase_lsu_bac"/>
</dbReference>
<dbReference type="NCBIfam" id="TIGR01343">
    <property type="entry name" value="hacA_fam"/>
    <property type="match status" value="1"/>
</dbReference>
<dbReference type="NCBIfam" id="TIGR02086">
    <property type="entry name" value="IPMI_arch"/>
    <property type="match status" value="1"/>
</dbReference>
<dbReference type="NCBIfam" id="TIGR02083">
    <property type="entry name" value="LEU2"/>
    <property type="match status" value="1"/>
</dbReference>
<dbReference type="NCBIfam" id="NF001614">
    <property type="entry name" value="PRK00402.1"/>
    <property type="match status" value="1"/>
</dbReference>
<dbReference type="PANTHER" id="PTHR43822:SF16">
    <property type="entry name" value="3-ISOPROPYLMALATE DEHYDRATASE LARGE SUBUNIT 2"/>
    <property type="match status" value="1"/>
</dbReference>
<dbReference type="PANTHER" id="PTHR43822">
    <property type="entry name" value="HOMOACONITASE, MITOCHONDRIAL-RELATED"/>
    <property type="match status" value="1"/>
</dbReference>
<dbReference type="Pfam" id="PF00330">
    <property type="entry name" value="Aconitase"/>
    <property type="match status" value="2"/>
</dbReference>
<dbReference type="PRINTS" id="PR00415">
    <property type="entry name" value="ACONITASE"/>
</dbReference>
<dbReference type="SUPFAM" id="SSF53732">
    <property type="entry name" value="Aconitase iron-sulfur domain"/>
    <property type="match status" value="1"/>
</dbReference>
<dbReference type="PROSITE" id="PS00450">
    <property type="entry name" value="ACONITASE_1"/>
    <property type="match status" value="1"/>
</dbReference>
<dbReference type="PROSITE" id="PS01244">
    <property type="entry name" value="ACONITASE_2"/>
    <property type="match status" value="1"/>
</dbReference>
<sequence>MGHTITEKIIADHAGKKEVFPGELVTAKIDLAMANDVTAPLSIKTLEKYGIEKVFDKDKIALVLSHFVPAKDIKSAEQAKIVRDFAKKHNIKWFFGEGEGIEHTLLPENGIVVPGDLVVGADSHTCTYGGIGAFSTGVGSTDLAYAMATGEIWLKVPESMKFIFYGKLNKWVSGKDLILYTIGQIGVDGALYRAMEFDGEAIRSLDVSQRLTIANMAIEAGGKSGIISPDEKTIEYVEKRAKKPYKIYQSDKDAHYVEVYEWDASSIEPMVAWPYLPSNVHPVSESTHITIDQAFIGSCTNGRIEDLRIAASILKGKKVHPYTRCVVIPASKNVYLQALHEGLVDIFIEAGCAVSTSTCGPCLGGHMGILAKGERCISTSNRNFPGRMGHPQSEAYLANPAVVAASAVLGRIAHPEEVASEVLV</sequence>
<reference key="1">
    <citation type="journal article" date="2009" name="J. Bacteriol.">
        <title>Complete and draft genome sequences of six members of the Aquificales.</title>
        <authorList>
            <person name="Reysenbach A.-L."/>
            <person name="Hamamura N."/>
            <person name="Podar M."/>
            <person name="Griffiths E."/>
            <person name="Ferreira S."/>
            <person name="Hochstein R."/>
            <person name="Heidelberg J."/>
            <person name="Johnson J."/>
            <person name="Mead D."/>
            <person name="Pohorille A."/>
            <person name="Sarmiento M."/>
            <person name="Schweighofer K."/>
            <person name="Seshadri R."/>
            <person name="Voytek M.A."/>
        </authorList>
    </citation>
    <scope>NUCLEOTIDE SEQUENCE [LARGE SCALE GENOMIC DNA]</scope>
    <source>
        <strain>Y04AAS1</strain>
    </source>
</reference>
<accession>B4U7U5</accession>
<evidence type="ECO:0000255" key="1">
    <source>
        <dbReference type="HAMAP-Rule" id="MF_01027"/>
    </source>
</evidence>
<organism>
    <name type="scientific">Hydrogenobaculum sp. (strain Y04AAS1)</name>
    <dbReference type="NCBI Taxonomy" id="380749"/>
    <lineage>
        <taxon>Bacteria</taxon>
        <taxon>Pseudomonadati</taxon>
        <taxon>Aquificota</taxon>
        <taxon>Aquificia</taxon>
        <taxon>Aquificales</taxon>
        <taxon>Aquificaceae</taxon>
        <taxon>Hydrogenobaculum</taxon>
    </lineage>
</organism>
<gene>
    <name evidence="1" type="primary">leuC</name>
    <name type="ordered locus">HY04AAS1_0519</name>
</gene>
<keyword id="KW-0004">4Fe-4S</keyword>
<keyword id="KW-0028">Amino-acid biosynthesis</keyword>
<keyword id="KW-0100">Branched-chain amino acid biosynthesis</keyword>
<keyword id="KW-0408">Iron</keyword>
<keyword id="KW-0411">Iron-sulfur</keyword>
<keyword id="KW-0432">Leucine biosynthesis</keyword>
<keyword id="KW-0456">Lyase</keyword>
<keyword id="KW-0479">Metal-binding</keyword>
<name>LEUC_HYDS0</name>